<proteinExistence type="inferred from homology"/>
<feature type="chain" id="PRO_1000002840" description="Crossover junction endodeoxyribonuclease RuvC">
    <location>
        <begin position="1"/>
        <end position="159"/>
    </location>
</feature>
<feature type="active site" evidence="1">
    <location>
        <position position="7"/>
    </location>
</feature>
<feature type="active site" evidence="1">
    <location>
        <position position="66"/>
    </location>
</feature>
<feature type="active site" evidence="1">
    <location>
        <position position="139"/>
    </location>
</feature>
<feature type="binding site" evidence="1">
    <location>
        <position position="7"/>
    </location>
    <ligand>
        <name>Mg(2+)</name>
        <dbReference type="ChEBI" id="CHEBI:18420"/>
        <label>1</label>
    </ligand>
</feature>
<feature type="binding site" evidence="1">
    <location>
        <position position="66"/>
    </location>
    <ligand>
        <name>Mg(2+)</name>
        <dbReference type="ChEBI" id="CHEBI:18420"/>
        <label>2</label>
    </ligand>
</feature>
<feature type="binding site" evidence="1">
    <location>
        <position position="139"/>
    </location>
    <ligand>
        <name>Mg(2+)</name>
        <dbReference type="ChEBI" id="CHEBI:18420"/>
        <label>1</label>
    </ligand>
</feature>
<comment type="function">
    <text evidence="1">The RuvA-RuvB-RuvC complex processes Holliday junction (HJ) DNA during genetic recombination and DNA repair. Endonuclease that resolves HJ intermediates. Cleaves cruciform DNA by making single-stranded nicks across the HJ at symmetrical positions within the homologous arms, yielding a 5'-phosphate and a 3'-hydroxyl group; requires a central core of homology in the junction. The consensus cleavage sequence is 5'-(A/T)TT(C/G)-3'. Cleavage occurs on the 3'-side of the TT dinucleotide at the point of strand exchange. HJ branch migration catalyzed by RuvA-RuvB allows RuvC to scan DNA until it finds its consensus sequence, where it cleaves and resolves the cruciform DNA.</text>
</comment>
<comment type="catalytic activity">
    <reaction evidence="1">
        <text>Endonucleolytic cleavage at a junction such as a reciprocal single-stranded crossover between two homologous DNA duplexes (Holliday junction).</text>
        <dbReference type="EC" id="3.1.21.10"/>
    </reaction>
</comment>
<comment type="cofactor">
    <cofactor evidence="1">
        <name>Mg(2+)</name>
        <dbReference type="ChEBI" id="CHEBI:18420"/>
    </cofactor>
    <text evidence="1">Binds 2 Mg(2+) ion per subunit.</text>
</comment>
<comment type="subunit">
    <text evidence="1">Homodimer which binds Holliday junction (HJ) DNA. The HJ becomes 2-fold symmetrical on binding to RuvC with unstacked arms; it has a different conformation from HJ DNA in complex with RuvA. In the full resolvosome a probable DNA-RuvA(4)-RuvB(12)-RuvC(2) complex forms which resolves the HJ.</text>
</comment>
<comment type="subcellular location">
    <subcellularLocation>
        <location evidence="1">Cytoplasm</location>
    </subcellularLocation>
</comment>
<comment type="similarity">
    <text evidence="1">Belongs to the RuvC family.</text>
</comment>
<protein>
    <recommendedName>
        <fullName evidence="1">Crossover junction endodeoxyribonuclease RuvC</fullName>
        <ecNumber evidence="1">3.1.21.10</ecNumber>
    </recommendedName>
    <alternativeName>
        <fullName evidence="1">Holliday junction nuclease RuvC</fullName>
    </alternativeName>
    <alternativeName>
        <fullName evidence="1">Holliday junction resolvase RuvC</fullName>
    </alternativeName>
</protein>
<reference key="1">
    <citation type="journal article" date="2007" name="Proc. Natl. Acad. Sci. U.S.A.">
        <title>Deep-sea vent epsilon-proteobacterial genomes provide insights into emergence of pathogens.</title>
        <authorList>
            <person name="Nakagawa S."/>
            <person name="Takaki Y."/>
            <person name="Shimamura S."/>
            <person name="Reysenbach A.-L."/>
            <person name="Takai K."/>
            <person name="Horikoshi K."/>
        </authorList>
    </citation>
    <scope>NUCLEOTIDE SEQUENCE [LARGE SCALE GENOMIC DNA]</scope>
    <source>
        <strain>NBC37-1</strain>
    </source>
</reference>
<organism>
    <name type="scientific">Sulfurovum sp. (strain NBC37-1)</name>
    <dbReference type="NCBI Taxonomy" id="387093"/>
    <lineage>
        <taxon>Bacteria</taxon>
        <taxon>Pseudomonadati</taxon>
        <taxon>Campylobacterota</taxon>
        <taxon>Epsilonproteobacteria</taxon>
        <taxon>Campylobacterales</taxon>
        <taxon>Sulfurovaceae</taxon>
        <taxon>Sulfurovum</taxon>
    </lineage>
</organism>
<keyword id="KW-0963">Cytoplasm</keyword>
<keyword id="KW-0227">DNA damage</keyword>
<keyword id="KW-0233">DNA recombination</keyword>
<keyword id="KW-0234">DNA repair</keyword>
<keyword id="KW-0238">DNA-binding</keyword>
<keyword id="KW-0255">Endonuclease</keyword>
<keyword id="KW-0378">Hydrolase</keyword>
<keyword id="KW-0460">Magnesium</keyword>
<keyword id="KW-0479">Metal-binding</keyword>
<keyword id="KW-0540">Nuclease</keyword>
<evidence type="ECO:0000255" key="1">
    <source>
        <dbReference type="HAMAP-Rule" id="MF_00034"/>
    </source>
</evidence>
<sequence>MNILGIDPGSRNLGYCILHWDGKKFSLVEAGLLKIKTKELQEQIVELVEGIDIILKAHQIDEVAIEDIFFAYNPQSVLKLAQFRGALSLKILQEIGYFYEYTPLQVKKAVTGNGKATKEQVAFMVKRLLGIKKEIKPLDITDAMAIAITHLQRVKMRKK</sequence>
<accession>A6QD40</accession>
<dbReference type="EC" id="3.1.21.10" evidence="1"/>
<dbReference type="EMBL" id="AP009179">
    <property type="protein sequence ID" value="BAF73399.1"/>
    <property type="molecule type" value="Genomic_DNA"/>
</dbReference>
<dbReference type="RefSeq" id="WP_012084242.1">
    <property type="nucleotide sequence ID" value="NC_009663.1"/>
</dbReference>
<dbReference type="SMR" id="A6QD40"/>
<dbReference type="STRING" id="387093.SUN_2466"/>
<dbReference type="KEGG" id="sun:SUN_2466"/>
<dbReference type="eggNOG" id="COG0817">
    <property type="taxonomic scope" value="Bacteria"/>
</dbReference>
<dbReference type="HOGENOM" id="CLU_091257_3_0_7"/>
<dbReference type="OrthoDB" id="9805499at2"/>
<dbReference type="Proteomes" id="UP000006378">
    <property type="component" value="Chromosome"/>
</dbReference>
<dbReference type="GO" id="GO:0005737">
    <property type="term" value="C:cytoplasm"/>
    <property type="evidence" value="ECO:0007669"/>
    <property type="project" value="UniProtKB-SubCell"/>
</dbReference>
<dbReference type="GO" id="GO:0048476">
    <property type="term" value="C:Holliday junction resolvase complex"/>
    <property type="evidence" value="ECO:0007669"/>
    <property type="project" value="UniProtKB-UniRule"/>
</dbReference>
<dbReference type="GO" id="GO:0008821">
    <property type="term" value="F:crossover junction DNA endonuclease activity"/>
    <property type="evidence" value="ECO:0007669"/>
    <property type="project" value="UniProtKB-UniRule"/>
</dbReference>
<dbReference type="GO" id="GO:0003677">
    <property type="term" value="F:DNA binding"/>
    <property type="evidence" value="ECO:0007669"/>
    <property type="project" value="UniProtKB-KW"/>
</dbReference>
<dbReference type="GO" id="GO:0000287">
    <property type="term" value="F:magnesium ion binding"/>
    <property type="evidence" value="ECO:0007669"/>
    <property type="project" value="UniProtKB-UniRule"/>
</dbReference>
<dbReference type="GO" id="GO:0006310">
    <property type="term" value="P:DNA recombination"/>
    <property type="evidence" value="ECO:0007669"/>
    <property type="project" value="UniProtKB-UniRule"/>
</dbReference>
<dbReference type="GO" id="GO:0006281">
    <property type="term" value="P:DNA repair"/>
    <property type="evidence" value="ECO:0007669"/>
    <property type="project" value="UniProtKB-UniRule"/>
</dbReference>
<dbReference type="CDD" id="cd16962">
    <property type="entry name" value="RuvC"/>
    <property type="match status" value="1"/>
</dbReference>
<dbReference type="FunFam" id="3.30.420.10:FF:000002">
    <property type="entry name" value="Crossover junction endodeoxyribonuclease RuvC"/>
    <property type="match status" value="1"/>
</dbReference>
<dbReference type="Gene3D" id="3.30.420.10">
    <property type="entry name" value="Ribonuclease H-like superfamily/Ribonuclease H"/>
    <property type="match status" value="1"/>
</dbReference>
<dbReference type="HAMAP" id="MF_00034">
    <property type="entry name" value="RuvC"/>
    <property type="match status" value="1"/>
</dbReference>
<dbReference type="InterPro" id="IPR012337">
    <property type="entry name" value="RNaseH-like_sf"/>
</dbReference>
<dbReference type="InterPro" id="IPR036397">
    <property type="entry name" value="RNaseH_sf"/>
</dbReference>
<dbReference type="InterPro" id="IPR020563">
    <property type="entry name" value="X-over_junc_endoDNase_Mg_BS"/>
</dbReference>
<dbReference type="InterPro" id="IPR002176">
    <property type="entry name" value="X-over_junc_endoDNase_RuvC"/>
</dbReference>
<dbReference type="NCBIfam" id="TIGR00228">
    <property type="entry name" value="ruvC"/>
    <property type="match status" value="1"/>
</dbReference>
<dbReference type="PANTHER" id="PTHR30194">
    <property type="entry name" value="CROSSOVER JUNCTION ENDODEOXYRIBONUCLEASE RUVC"/>
    <property type="match status" value="1"/>
</dbReference>
<dbReference type="PANTHER" id="PTHR30194:SF3">
    <property type="entry name" value="CROSSOVER JUNCTION ENDODEOXYRIBONUCLEASE RUVC"/>
    <property type="match status" value="1"/>
</dbReference>
<dbReference type="Pfam" id="PF02075">
    <property type="entry name" value="RuvC"/>
    <property type="match status" value="1"/>
</dbReference>
<dbReference type="PRINTS" id="PR00696">
    <property type="entry name" value="RSOLVASERUVC"/>
</dbReference>
<dbReference type="SUPFAM" id="SSF53098">
    <property type="entry name" value="Ribonuclease H-like"/>
    <property type="match status" value="1"/>
</dbReference>
<dbReference type="PROSITE" id="PS01321">
    <property type="entry name" value="RUVC"/>
    <property type="match status" value="1"/>
</dbReference>
<name>RUVC_SULNB</name>
<gene>
    <name evidence="1" type="primary">ruvC</name>
    <name type="ordered locus">SUN_2466</name>
</gene>